<protein>
    <recommendedName>
        <fullName>Mucolipin-2</fullName>
    </recommendedName>
    <alternativeName>
        <fullName>Transient receptor potential channel mucolipin 2</fullName>
        <shortName>TRPML2</shortName>
    </alternativeName>
</protein>
<gene>
    <name type="primary">Mcoln2</name>
</gene>
<dbReference type="EMBL" id="AY083532">
    <property type="protein sequence ID" value="AAM08925.1"/>
    <property type="molecule type" value="mRNA"/>
</dbReference>
<dbReference type="EMBL" id="AF503575">
    <property type="protein sequence ID" value="AAM28596.1"/>
    <property type="molecule type" value="mRNA"/>
</dbReference>
<dbReference type="EMBL" id="AK014467">
    <property type="protein sequence ID" value="BAB29372.1"/>
    <property type="molecule type" value="mRNA"/>
</dbReference>
<dbReference type="EMBL" id="AK019454">
    <property type="protein sequence ID" value="BAB31730.1"/>
    <property type="molecule type" value="mRNA"/>
</dbReference>
<dbReference type="EMBL" id="AK150446">
    <property type="protein sequence ID" value="BAE29568.1"/>
    <property type="molecule type" value="mRNA"/>
</dbReference>
<dbReference type="EMBL" id="AK150547">
    <property type="protein sequence ID" value="BAE29649.1"/>
    <property type="molecule type" value="mRNA"/>
</dbReference>
<dbReference type="EMBL" id="AK152067">
    <property type="protein sequence ID" value="BAE30921.1"/>
    <property type="molecule type" value="mRNA"/>
</dbReference>
<dbReference type="EMBL" id="AK152943">
    <property type="protein sequence ID" value="BAE31614.1"/>
    <property type="molecule type" value="mRNA"/>
</dbReference>
<dbReference type="EMBL" id="AK159172">
    <property type="protein sequence ID" value="BAE34872.1"/>
    <property type="molecule type" value="mRNA"/>
</dbReference>
<dbReference type="EMBL" id="BC029847">
    <property type="protein sequence ID" value="AAH29847.1"/>
    <property type="molecule type" value="mRNA"/>
</dbReference>
<dbReference type="CCDS" id="CCDS38663.1">
    <molecule id="Q8K595-1"/>
</dbReference>
<dbReference type="CCDS" id="CCDS38664.1">
    <molecule id="Q8K595-2"/>
</dbReference>
<dbReference type="RefSeq" id="NP_001005846.1">
    <molecule id="Q8K595-2"/>
    <property type="nucleotide sequence ID" value="NM_001005846.2"/>
</dbReference>
<dbReference type="RefSeq" id="NP_080932.2">
    <molecule id="Q8K595-1"/>
    <property type="nucleotide sequence ID" value="NM_026656.4"/>
</dbReference>
<dbReference type="PDB" id="7DYS">
    <property type="method" value="EM"/>
    <property type="resolution" value="3.18 A"/>
    <property type="chains" value="A/B/C/D=1-518"/>
</dbReference>
<dbReference type="PDBsum" id="7DYS"/>
<dbReference type="EMDB" id="EMD-30924"/>
<dbReference type="SMR" id="Q8K595"/>
<dbReference type="FunCoup" id="Q8K595">
    <property type="interactions" value="379"/>
</dbReference>
<dbReference type="STRING" id="10090.ENSMUSP00000011152"/>
<dbReference type="iPTMnet" id="Q8K595"/>
<dbReference type="PhosphoSitePlus" id="Q8K595"/>
<dbReference type="PaxDb" id="10090-ENSMUSP00000011152"/>
<dbReference type="ProteomicsDB" id="292193">
    <molecule id="Q8K595-1"/>
</dbReference>
<dbReference type="ProteomicsDB" id="292194">
    <molecule id="Q8K595-2"/>
</dbReference>
<dbReference type="Antibodypedia" id="19780">
    <property type="antibodies" value="52 antibodies from 13 providers"/>
</dbReference>
<dbReference type="DNASU" id="68279"/>
<dbReference type="Ensembl" id="ENSMUST00000011152.14">
    <molecule id="Q8K595-1"/>
    <property type="protein sequence ID" value="ENSMUSP00000011152.8"/>
    <property type="gene ID" value="ENSMUSG00000011008.14"/>
</dbReference>
<dbReference type="Ensembl" id="ENSMUST00000098524.5">
    <molecule id="Q8K595-2"/>
    <property type="protein sequence ID" value="ENSMUSP00000096125.5"/>
    <property type="gene ID" value="ENSMUSG00000011008.14"/>
</dbReference>
<dbReference type="GeneID" id="68279"/>
<dbReference type="KEGG" id="mmu:68279"/>
<dbReference type="UCSC" id="uc008rqy.1">
    <molecule id="Q8K595-1"/>
    <property type="organism name" value="mouse"/>
</dbReference>
<dbReference type="AGR" id="MGI:1915529"/>
<dbReference type="CTD" id="255231"/>
<dbReference type="MGI" id="MGI:1915529">
    <property type="gene designation" value="Mcoln2"/>
</dbReference>
<dbReference type="VEuPathDB" id="HostDB:ENSMUSG00000011008"/>
<dbReference type="eggNOG" id="KOG3733">
    <property type="taxonomic scope" value="Eukaryota"/>
</dbReference>
<dbReference type="GeneTree" id="ENSGT00950000183036"/>
<dbReference type="HOGENOM" id="CLU_020945_1_1_1"/>
<dbReference type="InParanoid" id="Q8K595"/>
<dbReference type="OMA" id="QECKDWN"/>
<dbReference type="OrthoDB" id="263481at2759"/>
<dbReference type="PhylomeDB" id="Q8K595"/>
<dbReference type="TreeFam" id="TF317783"/>
<dbReference type="Reactome" id="R-MMU-3295583">
    <property type="pathway name" value="TRP channels"/>
</dbReference>
<dbReference type="BioGRID-ORCS" id="68279">
    <property type="hits" value="3 hits in 62 CRISPR screens"/>
</dbReference>
<dbReference type="PRO" id="PR:Q8K595"/>
<dbReference type="Proteomes" id="UP000000589">
    <property type="component" value="Chromosome 3"/>
</dbReference>
<dbReference type="RNAct" id="Q8K595">
    <property type="molecule type" value="protein"/>
</dbReference>
<dbReference type="Bgee" id="ENSMUSG00000011008">
    <property type="expression patterns" value="Expressed in ileal epithelium and 78 other cell types or tissues"/>
</dbReference>
<dbReference type="ExpressionAtlas" id="Q8K595">
    <property type="expression patterns" value="baseline and differential"/>
</dbReference>
<dbReference type="GO" id="GO:0005765">
    <property type="term" value="C:lysosomal membrane"/>
    <property type="evidence" value="ECO:0007669"/>
    <property type="project" value="UniProtKB-SubCell"/>
</dbReference>
<dbReference type="GO" id="GO:0005886">
    <property type="term" value="C:plasma membrane"/>
    <property type="evidence" value="ECO:0007669"/>
    <property type="project" value="UniProtKB-SubCell"/>
</dbReference>
<dbReference type="GO" id="GO:0055037">
    <property type="term" value="C:recycling endosome"/>
    <property type="evidence" value="ECO:0000314"/>
    <property type="project" value="MGI"/>
</dbReference>
<dbReference type="GO" id="GO:0055038">
    <property type="term" value="C:recycling endosome membrane"/>
    <property type="evidence" value="ECO:0007669"/>
    <property type="project" value="UniProtKB-SubCell"/>
</dbReference>
<dbReference type="GO" id="GO:0005262">
    <property type="term" value="F:calcium channel activity"/>
    <property type="evidence" value="ECO:0007669"/>
    <property type="project" value="UniProtKB-KW"/>
</dbReference>
<dbReference type="GO" id="GO:0042802">
    <property type="term" value="F:identical protein binding"/>
    <property type="evidence" value="ECO:0000353"/>
    <property type="project" value="MGI"/>
</dbReference>
<dbReference type="GO" id="GO:0005381">
    <property type="term" value="F:iron ion transmembrane transporter activity"/>
    <property type="evidence" value="ECO:0000314"/>
    <property type="project" value="UniProtKB"/>
</dbReference>
<dbReference type="GO" id="GO:0002250">
    <property type="term" value="P:adaptive immune response"/>
    <property type="evidence" value="ECO:0007669"/>
    <property type="project" value="UniProtKB-KW"/>
</dbReference>
<dbReference type="GO" id="GO:0045087">
    <property type="term" value="P:innate immune response"/>
    <property type="evidence" value="ECO:0007669"/>
    <property type="project" value="UniProtKB-KW"/>
</dbReference>
<dbReference type="GO" id="GO:1905517">
    <property type="term" value="P:macrophage migration"/>
    <property type="evidence" value="ECO:0000315"/>
    <property type="project" value="MGI"/>
</dbReference>
<dbReference type="GO" id="GO:1990266">
    <property type="term" value="P:neutrophil migration"/>
    <property type="evidence" value="ECO:0000315"/>
    <property type="project" value="MGI"/>
</dbReference>
<dbReference type="GO" id="GO:0071651">
    <property type="term" value="P:positive regulation of chemokine (C-C motif) ligand 5 production"/>
    <property type="evidence" value="ECO:0000315"/>
    <property type="project" value="MGI"/>
</dbReference>
<dbReference type="GO" id="GO:2000343">
    <property type="term" value="P:positive regulation of chemokine (C-X-C motif) ligand 2 production"/>
    <property type="evidence" value="ECO:0000315"/>
    <property type="project" value="MGI"/>
</dbReference>
<dbReference type="GO" id="GO:0032722">
    <property type="term" value="P:positive regulation of chemokine production"/>
    <property type="evidence" value="ECO:0000315"/>
    <property type="project" value="MGI"/>
</dbReference>
<dbReference type="GO" id="GO:0071642">
    <property type="term" value="P:positive regulation of macrophage inflammatory protein 1 alpha production"/>
    <property type="evidence" value="ECO:0000315"/>
    <property type="project" value="MGI"/>
</dbReference>
<dbReference type="GO" id="GO:0071639">
    <property type="term" value="P:positive regulation of monocyte chemotactic protein-1 production"/>
    <property type="evidence" value="ECO:0000315"/>
    <property type="project" value="MGI"/>
</dbReference>
<dbReference type="GO" id="GO:0015031">
    <property type="term" value="P:protein transport"/>
    <property type="evidence" value="ECO:0007669"/>
    <property type="project" value="UniProtKB-KW"/>
</dbReference>
<dbReference type="GO" id="GO:2000341">
    <property type="term" value="P:regulation of chemokine (C-X-C motif) ligand 2 production"/>
    <property type="evidence" value="ECO:0000315"/>
    <property type="project" value="MGI"/>
</dbReference>
<dbReference type="FunFam" id="1.10.287.70:FF:000033">
    <property type="entry name" value="Mucolipin 1"/>
    <property type="match status" value="1"/>
</dbReference>
<dbReference type="Gene3D" id="1.10.287.70">
    <property type="match status" value="1"/>
</dbReference>
<dbReference type="InterPro" id="IPR049134">
    <property type="entry name" value="MCLN_ECD"/>
</dbReference>
<dbReference type="InterPro" id="IPR039031">
    <property type="entry name" value="Mucolipin"/>
</dbReference>
<dbReference type="InterPro" id="IPR013122">
    <property type="entry name" value="PKD1_2_channel"/>
</dbReference>
<dbReference type="PANTHER" id="PTHR12127">
    <property type="entry name" value="MUCOLIPIN"/>
    <property type="match status" value="1"/>
</dbReference>
<dbReference type="PANTHER" id="PTHR12127:SF4">
    <property type="entry name" value="MUCOLIPIN-2"/>
    <property type="match status" value="1"/>
</dbReference>
<dbReference type="Pfam" id="PF21381">
    <property type="entry name" value="MCLN_ECD"/>
    <property type="match status" value="1"/>
</dbReference>
<dbReference type="Pfam" id="PF08016">
    <property type="entry name" value="PKD_channel"/>
    <property type="match status" value="1"/>
</dbReference>
<evidence type="ECO:0000250" key="1">
    <source>
        <dbReference type="UniProtKB" id="F6RG56"/>
    </source>
</evidence>
<evidence type="ECO:0000250" key="2">
    <source>
        <dbReference type="UniProtKB" id="Q8IZK6"/>
    </source>
</evidence>
<evidence type="ECO:0000250" key="3">
    <source>
        <dbReference type="UniProtKB" id="Q9GZU1"/>
    </source>
</evidence>
<evidence type="ECO:0000269" key="4">
    <source>
    </source>
</evidence>
<evidence type="ECO:0000269" key="5">
    <source>
    </source>
</evidence>
<evidence type="ECO:0000269" key="6">
    <source>
    </source>
</evidence>
<evidence type="ECO:0000269" key="7">
    <source>
    </source>
</evidence>
<evidence type="ECO:0000269" key="8">
    <source>
    </source>
</evidence>
<evidence type="ECO:0000303" key="9">
    <source>
    </source>
</evidence>
<evidence type="ECO:0000303" key="10">
    <source>
    </source>
</evidence>
<evidence type="ECO:0000303" key="11">
    <source>
    </source>
</evidence>
<evidence type="ECO:0000305" key="12"/>
<evidence type="ECO:0000305" key="13">
    <source>
    </source>
</evidence>
<evidence type="ECO:0007829" key="14">
    <source>
        <dbReference type="PDB" id="7DYS"/>
    </source>
</evidence>
<feature type="chain" id="PRO_0000215366" description="Mucolipin-2">
    <location>
        <begin position="1"/>
        <end position="566"/>
    </location>
</feature>
<feature type="topological domain" description="Cytoplasmic" evidence="1">
    <location>
        <begin position="1"/>
        <end position="65"/>
    </location>
</feature>
<feature type="transmembrane region" description="Helical" evidence="1">
    <location>
        <begin position="66"/>
        <end position="86"/>
    </location>
</feature>
<feature type="topological domain" description="Extracellular" evidence="1">
    <location>
        <begin position="87"/>
        <end position="288"/>
    </location>
</feature>
<feature type="transmembrane region" description="Helical" evidence="1">
    <location>
        <begin position="289"/>
        <end position="309"/>
    </location>
</feature>
<feature type="topological domain" description="Cytoplasmic" evidence="1">
    <location>
        <begin position="310"/>
        <end position="346"/>
    </location>
</feature>
<feature type="transmembrane region" description="Helical" evidence="1">
    <location>
        <begin position="347"/>
        <end position="367"/>
    </location>
</feature>
<feature type="topological domain" description="Extracellular" evidence="1">
    <location>
        <begin position="368"/>
        <end position="376"/>
    </location>
</feature>
<feature type="transmembrane region" description="Helical" evidence="1">
    <location>
        <begin position="377"/>
        <end position="397"/>
    </location>
</feature>
<feature type="topological domain" description="Cytoplasmic" evidence="1">
    <location>
        <begin position="398"/>
        <end position="419"/>
    </location>
</feature>
<feature type="transmembrane region" description="Helical" evidence="1">
    <location>
        <begin position="420"/>
        <end position="440"/>
    </location>
</feature>
<feature type="topological domain" description="Extracellular" evidence="1">
    <location>
        <begin position="441"/>
        <end position="448"/>
    </location>
</feature>
<feature type="intramembrane region" description="Pore-forming" evidence="1">
    <location>
        <begin position="449"/>
        <end position="469"/>
    </location>
</feature>
<feature type="topological domain" description="Extracellular" evidence="1">
    <location>
        <begin position="470"/>
        <end position="480"/>
    </location>
</feature>
<feature type="transmembrane region" description="Helical" evidence="1">
    <location>
        <begin position="481"/>
        <end position="502"/>
    </location>
</feature>
<feature type="topological domain" description="Cytoplasmic" evidence="1">
    <location>
        <begin position="503"/>
        <end position="566"/>
    </location>
</feature>
<feature type="region of interest" description="Extracellular/lumenal pore loop" evidence="3">
    <location>
        <begin position="107"/>
        <end position="123"/>
    </location>
</feature>
<feature type="short sequence motif" description="Selectivity filter" evidence="1">
    <location>
        <begin position="461"/>
        <end position="464"/>
    </location>
</feature>
<feature type="disulfide bond" evidence="3">
    <location>
        <begin position="164"/>
        <end position="190"/>
    </location>
</feature>
<feature type="disulfide bond" evidence="3">
    <location>
        <begin position="243"/>
        <end position="274"/>
    </location>
</feature>
<feature type="splice variant" id="VSP_010822" description="In isoform 2." evidence="9 10 11">
    <location>
        <begin position="1"/>
        <end position="28"/>
    </location>
</feature>
<feature type="mutagenesis site" description="Constitutive active channel that mediates strong inwardly rectifying current." evidence="5">
    <original>A</original>
    <variation>P</variation>
    <location>
        <position position="424"/>
    </location>
</feature>
<feature type="sequence conflict" description="In Ref. 4; AAH29847." evidence="12" ref="4">
    <original>S</original>
    <variation>N</variation>
    <location>
        <position position="558"/>
    </location>
</feature>
<feature type="helix" evidence="14">
    <location>
        <begin position="67"/>
        <end position="105"/>
    </location>
</feature>
<feature type="strand" evidence="14">
    <location>
        <begin position="115"/>
        <end position="117"/>
    </location>
</feature>
<feature type="strand" evidence="14">
    <location>
        <begin position="119"/>
        <end position="121"/>
    </location>
</feature>
<feature type="strand" evidence="14">
    <location>
        <begin position="123"/>
        <end position="125"/>
    </location>
</feature>
<feature type="helix" evidence="14">
    <location>
        <begin position="126"/>
        <end position="139"/>
    </location>
</feature>
<feature type="helix" evidence="14">
    <location>
        <begin position="141"/>
        <end position="144"/>
    </location>
</feature>
<feature type="strand" evidence="14">
    <location>
        <begin position="147"/>
        <end position="151"/>
    </location>
</feature>
<feature type="strand" evidence="14">
    <location>
        <begin position="160"/>
        <end position="168"/>
    </location>
</feature>
<feature type="strand" evidence="14">
    <location>
        <begin position="186"/>
        <end position="193"/>
    </location>
</feature>
<feature type="helix" evidence="14">
    <location>
        <begin position="195"/>
        <end position="198"/>
    </location>
</feature>
<feature type="strand" evidence="14">
    <location>
        <begin position="202"/>
        <end position="204"/>
    </location>
</feature>
<feature type="helix" evidence="14">
    <location>
        <begin position="205"/>
        <end position="207"/>
    </location>
</feature>
<feature type="helix" evidence="14">
    <location>
        <begin position="209"/>
        <end position="211"/>
    </location>
</feature>
<feature type="turn" evidence="14">
    <location>
        <begin position="215"/>
        <end position="217"/>
    </location>
</feature>
<feature type="strand" evidence="14">
    <location>
        <begin position="218"/>
        <end position="229"/>
    </location>
</feature>
<feature type="turn" evidence="14">
    <location>
        <begin position="233"/>
        <end position="237"/>
    </location>
</feature>
<feature type="strand" evidence="14">
    <location>
        <begin position="246"/>
        <end position="253"/>
    </location>
</feature>
<feature type="strand" evidence="14">
    <location>
        <begin position="261"/>
        <end position="266"/>
    </location>
</feature>
<feature type="helix" evidence="14">
    <location>
        <begin position="292"/>
        <end position="318"/>
    </location>
</feature>
<feature type="helix" evidence="14">
    <location>
        <begin position="346"/>
        <end position="365"/>
    </location>
</feature>
<feature type="helix" evidence="14">
    <location>
        <begin position="377"/>
        <end position="396"/>
    </location>
</feature>
<feature type="helix" evidence="14">
    <location>
        <begin position="397"/>
        <end position="399"/>
    </location>
</feature>
<feature type="helix" evidence="14">
    <location>
        <begin position="401"/>
        <end position="439"/>
    </location>
</feature>
<feature type="helix" evidence="14">
    <location>
        <begin position="449"/>
        <end position="460"/>
    </location>
</feature>
<feature type="strand" evidence="14">
    <location>
        <begin position="462"/>
        <end position="464"/>
    </location>
</feature>
<feature type="helix" evidence="14">
    <location>
        <begin position="465"/>
        <end position="470"/>
    </location>
</feature>
<feature type="helix" evidence="14">
    <location>
        <begin position="478"/>
        <end position="516"/>
    </location>
</feature>
<keyword id="KW-0002">3D-structure</keyword>
<keyword id="KW-1064">Adaptive immunity</keyword>
<keyword id="KW-0025">Alternative splicing</keyword>
<keyword id="KW-0106">Calcium</keyword>
<keyword id="KW-0107">Calcium channel</keyword>
<keyword id="KW-0109">Calcium transport</keyword>
<keyword id="KW-1003">Cell membrane</keyword>
<keyword id="KW-1015">Disulfide bond</keyword>
<keyword id="KW-0967">Endosome</keyword>
<keyword id="KW-0391">Immunity</keyword>
<keyword id="KW-0399">Innate immunity</keyword>
<keyword id="KW-0407">Ion channel</keyword>
<keyword id="KW-0406">Ion transport</keyword>
<keyword id="KW-0458">Lysosome</keyword>
<keyword id="KW-0472">Membrane</keyword>
<keyword id="KW-0653">Protein transport</keyword>
<keyword id="KW-1185">Reference proteome</keyword>
<keyword id="KW-0812">Transmembrane</keyword>
<keyword id="KW-1133">Transmembrane helix</keyword>
<keyword id="KW-0813">Transport</keyword>
<organism>
    <name type="scientific">Mus musculus</name>
    <name type="common">Mouse</name>
    <dbReference type="NCBI Taxonomy" id="10090"/>
    <lineage>
        <taxon>Eukaryota</taxon>
        <taxon>Metazoa</taxon>
        <taxon>Chordata</taxon>
        <taxon>Craniata</taxon>
        <taxon>Vertebrata</taxon>
        <taxon>Euteleostomi</taxon>
        <taxon>Mammalia</taxon>
        <taxon>Eutheria</taxon>
        <taxon>Euarchontoglires</taxon>
        <taxon>Glires</taxon>
        <taxon>Rodentia</taxon>
        <taxon>Myomorpha</taxon>
        <taxon>Muroidea</taxon>
        <taxon>Muridae</taxon>
        <taxon>Murinae</taxon>
        <taxon>Mus</taxon>
        <taxon>Mus</taxon>
    </lineage>
</organism>
<proteinExistence type="evidence at protein level"/>
<sequence length="566" mass="65450">MPGDEETLDLPAWNRVPDLTWGPHHRSAMASLDSEVREECLREDLKFYFMSPCEKYRARRQIPWKLGLQILKIVMVTTQLVRFGLSNQLVVAFKEDNTVAFKHLFLKGFSGVDEDDYSCSIYTQENTYESIFFAIKQYRHLKNISLATLGYGESEDNRTGLKVCKQHYKTGAMFSSNETLNIDSDIETDCIHLDLQVLTTEPEDWAQTSFFRLDFYRLVQVDISFALKGIDLQAVHSREIPDCYLFQNTITFDNTAHSGKIKIYLNSEANIEECKNMNISGSTQRSTHYLLVFDVFVIMICLASLILCTRSIVLALRLRKRFLNFFLEKYKQRVCGADQWEFVNGWYVLVTISDLMTIIGSILKMEIKAKKLTNYDVCSILLGTSTLFVWVGVIRYLGYFQTYNVLILTMQASLPKVLRFCACAGMIYLGYTFCGWIVLGPYHEKFENLNIVAECLFSLVNGDDMFATFAQIQQKSILVWLFSRLYLYSFISLFIYMVLSLFIALITDSYHTIKKYQQHGFPETDLQKFLKESGSKDGYQKQPSALLSCLCCLRRRRSNDHLILID</sequence>
<reference key="1">
    <citation type="journal article" date="2002" name="Proc. Natl. Acad. Sci. U.S.A.">
        <title>Mutations in Mcoln3 associated with deafness and pigmentation defects in varitint-waddler (Va) mice.</title>
        <authorList>
            <person name="Di Palma F."/>
            <person name="Belyantseva I.A."/>
            <person name="Kim H.J."/>
            <person name="Vogt T.F."/>
            <person name="Kachar B."/>
            <person name="Noben-Trauth K."/>
        </authorList>
    </citation>
    <scope>NUCLEOTIDE SEQUENCE [MRNA] (ISOFORM 2)</scope>
    <source>
        <strain>C57BL/6J</strain>
    </source>
</reference>
<reference key="2">
    <citation type="submission" date="2002-04" db="EMBL/GenBank/DDBJ databases">
        <authorList>
            <person name="Kennedy J.C."/>
            <person name="Falardeau J.L."/>
            <person name="Acierno J.S. Jr."/>
            <person name="Slaugenhaupt S.A."/>
        </authorList>
    </citation>
    <scope>NUCLEOTIDE SEQUENCE [MRNA] (ISOFORM 1)</scope>
    <source>
        <strain>C57BL/6J</strain>
    </source>
</reference>
<reference key="3">
    <citation type="journal article" date="2005" name="Science">
        <title>The transcriptional landscape of the mammalian genome.</title>
        <authorList>
            <person name="Carninci P."/>
            <person name="Kasukawa T."/>
            <person name="Katayama S."/>
            <person name="Gough J."/>
            <person name="Frith M.C."/>
            <person name="Maeda N."/>
            <person name="Oyama R."/>
            <person name="Ravasi T."/>
            <person name="Lenhard B."/>
            <person name="Wells C."/>
            <person name="Kodzius R."/>
            <person name="Shimokawa K."/>
            <person name="Bajic V.B."/>
            <person name="Brenner S.E."/>
            <person name="Batalov S."/>
            <person name="Forrest A.R."/>
            <person name="Zavolan M."/>
            <person name="Davis M.J."/>
            <person name="Wilming L.G."/>
            <person name="Aidinis V."/>
            <person name="Allen J.E."/>
            <person name="Ambesi-Impiombato A."/>
            <person name="Apweiler R."/>
            <person name="Aturaliya R.N."/>
            <person name="Bailey T.L."/>
            <person name="Bansal M."/>
            <person name="Baxter L."/>
            <person name="Beisel K.W."/>
            <person name="Bersano T."/>
            <person name="Bono H."/>
            <person name="Chalk A.M."/>
            <person name="Chiu K.P."/>
            <person name="Choudhary V."/>
            <person name="Christoffels A."/>
            <person name="Clutterbuck D.R."/>
            <person name="Crowe M.L."/>
            <person name="Dalla E."/>
            <person name="Dalrymple B.P."/>
            <person name="de Bono B."/>
            <person name="Della Gatta G."/>
            <person name="di Bernardo D."/>
            <person name="Down T."/>
            <person name="Engstrom P."/>
            <person name="Fagiolini M."/>
            <person name="Faulkner G."/>
            <person name="Fletcher C.F."/>
            <person name="Fukushima T."/>
            <person name="Furuno M."/>
            <person name="Futaki S."/>
            <person name="Gariboldi M."/>
            <person name="Georgii-Hemming P."/>
            <person name="Gingeras T.R."/>
            <person name="Gojobori T."/>
            <person name="Green R.E."/>
            <person name="Gustincich S."/>
            <person name="Harbers M."/>
            <person name="Hayashi Y."/>
            <person name="Hensch T.K."/>
            <person name="Hirokawa N."/>
            <person name="Hill D."/>
            <person name="Huminiecki L."/>
            <person name="Iacono M."/>
            <person name="Ikeo K."/>
            <person name="Iwama A."/>
            <person name="Ishikawa T."/>
            <person name="Jakt M."/>
            <person name="Kanapin A."/>
            <person name="Katoh M."/>
            <person name="Kawasawa Y."/>
            <person name="Kelso J."/>
            <person name="Kitamura H."/>
            <person name="Kitano H."/>
            <person name="Kollias G."/>
            <person name="Krishnan S.P."/>
            <person name="Kruger A."/>
            <person name="Kummerfeld S.K."/>
            <person name="Kurochkin I.V."/>
            <person name="Lareau L.F."/>
            <person name="Lazarevic D."/>
            <person name="Lipovich L."/>
            <person name="Liu J."/>
            <person name="Liuni S."/>
            <person name="McWilliam S."/>
            <person name="Madan Babu M."/>
            <person name="Madera M."/>
            <person name="Marchionni L."/>
            <person name="Matsuda H."/>
            <person name="Matsuzawa S."/>
            <person name="Miki H."/>
            <person name="Mignone F."/>
            <person name="Miyake S."/>
            <person name="Morris K."/>
            <person name="Mottagui-Tabar S."/>
            <person name="Mulder N."/>
            <person name="Nakano N."/>
            <person name="Nakauchi H."/>
            <person name="Ng P."/>
            <person name="Nilsson R."/>
            <person name="Nishiguchi S."/>
            <person name="Nishikawa S."/>
            <person name="Nori F."/>
            <person name="Ohara O."/>
            <person name="Okazaki Y."/>
            <person name="Orlando V."/>
            <person name="Pang K.C."/>
            <person name="Pavan W.J."/>
            <person name="Pavesi G."/>
            <person name="Pesole G."/>
            <person name="Petrovsky N."/>
            <person name="Piazza S."/>
            <person name="Reed J."/>
            <person name="Reid J.F."/>
            <person name="Ring B.Z."/>
            <person name="Ringwald M."/>
            <person name="Rost B."/>
            <person name="Ruan Y."/>
            <person name="Salzberg S.L."/>
            <person name="Sandelin A."/>
            <person name="Schneider C."/>
            <person name="Schoenbach C."/>
            <person name="Sekiguchi K."/>
            <person name="Semple C.A."/>
            <person name="Seno S."/>
            <person name="Sessa L."/>
            <person name="Sheng Y."/>
            <person name="Shibata Y."/>
            <person name="Shimada H."/>
            <person name="Shimada K."/>
            <person name="Silva D."/>
            <person name="Sinclair B."/>
            <person name="Sperling S."/>
            <person name="Stupka E."/>
            <person name="Sugiura K."/>
            <person name="Sultana R."/>
            <person name="Takenaka Y."/>
            <person name="Taki K."/>
            <person name="Tammoja K."/>
            <person name="Tan S.L."/>
            <person name="Tang S."/>
            <person name="Taylor M.S."/>
            <person name="Tegner J."/>
            <person name="Teichmann S.A."/>
            <person name="Ueda H.R."/>
            <person name="van Nimwegen E."/>
            <person name="Verardo R."/>
            <person name="Wei C.L."/>
            <person name="Yagi K."/>
            <person name="Yamanishi H."/>
            <person name="Zabarovsky E."/>
            <person name="Zhu S."/>
            <person name="Zimmer A."/>
            <person name="Hide W."/>
            <person name="Bult C."/>
            <person name="Grimmond S.M."/>
            <person name="Teasdale R.D."/>
            <person name="Liu E.T."/>
            <person name="Brusic V."/>
            <person name="Quackenbush J."/>
            <person name="Wahlestedt C."/>
            <person name="Mattick J.S."/>
            <person name="Hume D.A."/>
            <person name="Kai C."/>
            <person name="Sasaki D."/>
            <person name="Tomaru Y."/>
            <person name="Fukuda S."/>
            <person name="Kanamori-Katayama M."/>
            <person name="Suzuki M."/>
            <person name="Aoki J."/>
            <person name="Arakawa T."/>
            <person name="Iida J."/>
            <person name="Imamura K."/>
            <person name="Itoh M."/>
            <person name="Kato T."/>
            <person name="Kawaji H."/>
            <person name="Kawagashira N."/>
            <person name="Kawashima T."/>
            <person name="Kojima M."/>
            <person name="Kondo S."/>
            <person name="Konno H."/>
            <person name="Nakano K."/>
            <person name="Ninomiya N."/>
            <person name="Nishio T."/>
            <person name="Okada M."/>
            <person name="Plessy C."/>
            <person name="Shibata K."/>
            <person name="Shiraki T."/>
            <person name="Suzuki S."/>
            <person name="Tagami M."/>
            <person name="Waki K."/>
            <person name="Watahiki A."/>
            <person name="Okamura-Oho Y."/>
            <person name="Suzuki H."/>
            <person name="Kawai J."/>
            <person name="Hayashizaki Y."/>
        </authorList>
    </citation>
    <scope>NUCLEOTIDE SEQUENCE [LARGE SCALE MRNA] (ISOFORMS 1 AND 2)</scope>
    <source>
        <strain>C57BL/6J</strain>
        <tissue>Bone marrow</tissue>
        <tissue>Embryo</tissue>
    </source>
</reference>
<reference key="4">
    <citation type="journal article" date="2004" name="Genome Res.">
        <title>The status, quality, and expansion of the NIH full-length cDNA project: the Mammalian Gene Collection (MGC).</title>
        <authorList>
            <consortium name="The MGC Project Team"/>
        </authorList>
    </citation>
    <scope>NUCLEOTIDE SEQUENCE [LARGE SCALE MRNA] (ISOFORM 2)</scope>
    <source>
        <tissue>Mammary tumor</tissue>
    </source>
</reference>
<reference key="5">
    <citation type="journal article" date="2006" name="Eur. J. Cell Biol.">
        <title>TRPML cation channels regulate the specialized lysosomal compartment of vertebrate B-lymphocytes.</title>
        <authorList>
            <person name="Song Y."/>
            <person name="Dayalu R."/>
            <person name="Matthews S.A."/>
            <person name="Scharenberg A.M."/>
        </authorList>
    </citation>
    <scope>FUNCTION</scope>
    <scope>SUBCELLULAR LOCATION</scope>
</reference>
<reference key="6">
    <citation type="journal article" date="2008" name="Nature">
        <title>The type IV mucolipidosis-associated protein TRPML1 is an endolysosomal iron release channel.</title>
        <authorList>
            <person name="Dong X.P."/>
            <person name="Cheng X."/>
            <person name="Mills E."/>
            <person name="Delling M."/>
            <person name="Wang F."/>
            <person name="Kurz T."/>
            <person name="Xu H."/>
        </authorList>
    </citation>
    <scope>FUNCTION</scope>
    <scope>MUTAGENESIS OF ALA-424</scope>
    <scope>TRANSPORTER ACTIVITY</scope>
    <scope>ACTIVITY REGULATION</scope>
</reference>
<reference key="7">
    <citation type="journal article" date="2009" name="Pflugers Arch.">
        <title>The tissue-specific expression of TRPML2 (MCOLN-2) gene is influenced by the presence of TRPML1.</title>
        <authorList>
            <person name="Samie M.A."/>
            <person name="Grimm C."/>
            <person name="Evans J.A."/>
            <person name="Curcio-Morelli C."/>
            <person name="Heller S."/>
            <person name="Slaugenhaupt S.A."/>
            <person name="Cuajungco M.P."/>
        </authorList>
    </citation>
    <scope>FUNCTION</scope>
    <scope>TRANSPORTER ACTIVITY</scope>
    <scope>TISSUE SPECIFICITY</scope>
</reference>
<reference key="8">
    <citation type="journal article" date="2012" name="J. Biol. Chem.">
        <title>Constitutive activity of TRPML2 and TRPML3 channels versus activation by low extracellular sodium and small molecules.</title>
        <authorList>
            <person name="Grimm C."/>
            <person name="Joers S."/>
            <person name="Guo Z."/>
            <person name="Obukhov A.G."/>
            <person name="Heller S."/>
        </authorList>
    </citation>
    <scope>FUNCTION</scope>
</reference>
<reference key="9">
    <citation type="journal article" date="2015" name="J. Immunol.">
        <title>Novel role of TRPML2 in the regulation of the innate immune response.</title>
        <authorList>
            <person name="Sun L."/>
            <person name="Hua Y."/>
            <person name="Vergarajauregui S."/>
            <person name="Diab H.I."/>
            <person name="Puertollano R."/>
        </authorList>
    </citation>
    <scope>FUNCTION</scope>
    <scope>DISRUPTION PHENOTYPE</scope>
    <scope>TISSUE SPECIFICITY</scope>
    <scope>INDUCTION</scope>
    <scope>SUBCELLULAR LOCATION</scope>
</reference>
<name>MCLN2_MOUSE</name>
<comment type="function">
    <text evidence="2 4 5 6 7 8 12">Nonselective cation channel probably playing a role in the regulation of membrane trafficking events. Acts as a Ca(2+)-permeable cation channel with inwardly rectifying activity (PubMed:19763610). May activate ARF6 and be involved in the trafficking of GPI-anchored cargo proteins to the cell surface via the ARF6-regulated recycling pathway (By similarity). May play a role in immune processes. In adaptive immunity, TRPML2 and TRPML1 may play redundant roles in the function of the specialized lysosomes of B cells (PubMed:17050035). In the innate immune response, may play a role in the regulation of chemokine secretion and macrophage migration (PubMed:26432893). Through a possible and probably tissue-specific heteromerization with MCOLN1 may be at least in part involved in many lysosome-dependent cellular events. Also functions as a Fe(2+) permeable channel (PubMed:18794901).</text>
</comment>
<comment type="catalytic activity">
    <reaction evidence="6">
        <text>Ca(2+)(in) = Ca(2+)(out)</text>
        <dbReference type="Rhea" id="RHEA:29671"/>
        <dbReference type="ChEBI" id="CHEBI:29108"/>
    </reaction>
</comment>
<comment type="catalytic activity">
    <molecule>Isoform 2</molecule>
    <reaction evidence="5">
        <text>Fe(2+)(in) = Fe(2+)(out)</text>
        <dbReference type="Rhea" id="RHEA:28486"/>
        <dbReference type="ChEBI" id="CHEBI:29033"/>
    </reaction>
</comment>
<comment type="activity regulation">
    <molecule>Isoform 2</molecule>
    <text evidence="5">Fe(2+) channel activity is potentiated by low pH.</text>
</comment>
<comment type="subunit">
    <text evidence="2">Forms homooligomeric complexes; probably tetrameric. Can heterooligomerize with MCOLN1; heteromeric assemblies have different channel properties as compared to the respective homooligomers and may be tissue-specific. Interacts with TMEM176A.</text>
</comment>
<comment type="subcellular location">
    <subcellularLocation>
        <location evidence="2">Cell membrane</location>
        <topology evidence="1">Multi-pass membrane protein</topology>
    </subcellularLocation>
    <subcellularLocation>
        <location evidence="13">Lysosome membrane</location>
        <topology evidence="1">Multi-pass membrane protein</topology>
    </subcellularLocation>
    <subcellularLocation>
        <location evidence="8">Recycling endosome membrane</location>
        <topology evidence="1">Multi-pass membrane protein</topology>
    </subcellularLocation>
    <text evidence="8">Localizes to recycling endosomes in activated macrophages and microglia.</text>
</comment>
<comment type="alternative products">
    <event type="alternative splicing"/>
    <isoform>
        <id>Q8K595-1</id>
        <name>1</name>
        <name>TRPML2lv</name>
        <sequence type="displayed"/>
    </isoform>
    <isoform>
        <id>Q8K595-2</id>
        <name>2</name>
        <name>TRPML2sv</name>
        <sequence type="described" ref="VSP_010822"/>
    </isoform>
</comment>
<comment type="tissue specificity">
    <text evidence="8">Expressed in activated macrophages and microglia (at protein level).</text>
</comment>
<comment type="tissue specificity">
    <molecule>Isoform 1</molecule>
    <text evidence="6">Isoform 1 is widely expressed at very low levels.</text>
</comment>
<comment type="tissue specificity">
    <molecule>Isoform 2</molecule>
    <text evidence="6">Isoform 2 is expressed at high levels in lymphoid tissues (thymus and spleen) and kidney, and at moderate levels in heart, lung, liver and stomach.</text>
</comment>
<comment type="induction">
    <text evidence="8">Up-regulated in microglia cells and macrophages by bacterial lipopolysaccharide (LPS). Up-regulated by infection with M.smegmatis.</text>
</comment>
<comment type="domain">
    <text evidence="3">The most N-terminal extracellular/lumenal domain (referred to as I-II linker or polycystin-mucolipin domain) contributes to a structure with a four-fold rotational symmetry in a tetrameric assembly; the structure contains a central highly electronegative pore with a 14 A diameter. The pore is critical for Ca(2+) and pH regulation. The protruding structure formed by the I-II linkers may contain all the interaction sites with lipids and proteins in the endolysosomal lumen.</text>
</comment>
<comment type="disruption phenotype">
    <text evidence="8">No visible phenotype. The secretion of specific cytokines (CCL3, CCL5 and CXCL2) by macrophages exposed to bacterial lipopolysaccharide (LPS) is decreased. Mutant mice display decreased migration of macrophages into the intraperitoneal space after injection with LPS, or after infection with E.coli O78:H11 (strain H10407).</text>
</comment>
<comment type="similarity">
    <text evidence="12">Belongs to the transient receptor (TC 1.A.4) family. Polycystin subfamily. MCOLN2 sub-subfamily.</text>
</comment>
<accession>Q8K595</accession>
<accession>Q3UCG4</accession>
<accession>Q8K2T6</accession>
<accession>Q9CQD3</accession>